<sequence length="149" mass="16823">MIETLYNLPFHILVPPNIKVRRFSIPMPSPMAVFSVILFSYFLVTGGIIYDVIVEPPSLGATVDEHGHSRPVAFMPYRVNGQYIMEGLASSFLFTVGGLGFIIMDQTHTPGKTNLNRLLLTAMGFIFILVSFFTTWLFMRMKLPSYLQP</sequence>
<gene>
    <name type="ORF">CG9662</name>
</gene>
<name>OSTC_DROME</name>
<proteinExistence type="evidence at transcript level"/>
<feature type="chain" id="PRO_0000320609" description="Putative oligosaccharyltransferase complex subunit CG9662">
    <location>
        <begin position="1"/>
        <end position="149"/>
    </location>
</feature>
<feature type="topological domain" description="Cytoplasmic" evidence="3">
    <location>
        <begin position="1"/>
        <end position="32"/>
    </location>
</feature>
<feature type="transmembrane region" description="Helical" evidence="3">
    <location>
        <begin position="33"/>
        <end position="53"/>
    </location>
</feature>
<feature type="topological domain" description="Extracellular" evidence="3">
    <location>
        <begin position="54"/>
        <end position="83"/>
    </location>
</feature>
<feature type="transmembrane region" description="Helical" evidence="3">
    <location>
        <begin position="84"/>
        <end position="104"/>
    </location>
</feature>
<feature type="topological domain" description="Cytoplasmic" evidence="3">
    <location>
        <begin position="105"/>
        <end position="117"/>
    </location>
</feature>
<feature type="transmembrane region" description="Helical" evidence="3">
    <location>
        <begin position="118"/>
        <end position="138"/>
    </location>
</feature>
<feature type="topological domain" description="Extracellular" evidence="3">
    <location>
        <begin position="139"/>
        <end position="149"/>
    </location>
</feature>
<evidence type="ECO:0000250" key="1">
    <source>
        <dbReference type="UniProtKB" id="P86218"/>
    </source>
</evidence>
<evidence type="ECO:0000250" key="2">
    <source>
        <dbReference type="UniProtKB" id="Q9NRP0"/>
    </source>
</evidence>
<evidence type="ECO:0000255" key="3"/>
<evidence type="ECO:0000305" key="4"/>
<protein>
    <recommendedName>
        <fullName>Putative oligosaccharyltransferase complex subunit CG9662</fullName>
    </recommendedName>
</protein>
<accession>Q9VQP9</accession>
<accession>Q7K050</accession>
<accession>Q8T985</accession>
<comment type="function">
    <text evidence="2">Subunit of the oligosaccharyl transferase (OST) complex that catalyzes the initial transfer of a defined glycan (Glc(3)Man(9)GlcNAc(2) in eukaryotes) from the lipid carrier dolichol-pyrophosphate to an asparagine residue within an Asn-X-Ser/Thr consensus motif in nascent polypeptide chains, the first step in protein N-glycosylation. N-glycosylation occurs cotranslationally and the complex associates with the Sec61 complex at the channel-forming translocon complex that mediates protein translocation across the endoplasmic reticulum (ER). All subunits are required for a maximal enzyme activity.</text>
</comment>
<comment type="subunit">
    <text evidence="1">Component of the oligosaccharyltransferase (OST) complex.</text>
</comment>
<comment type="subcellular location">
    <subcellularLocation>
        <location evidence="4">Membrane</location>
        <topology evidence="4">Multi-pass membrane protein</topology>
    </subcellularLocation>
</comment>
<comment type="similarity">
    <text evidence="4">Belongs to the OSTC family.</text>
</comment>
<comment type="sequence caution" evidence="4">
    <conflict type="erroneous initiation">
        <sequence resource="EMBL-CDS" id="AAL48399"/>
    </conflict>
</comment>
<dbReference type="EMBL" id="AE014134">
    <property type="protein sequence ID" value="AAF51116.3"/>
    <property type="molecule type" value="Genomic_DNA"/>
</dbReference>
<dbReference type="EMBL" id="AY070777">
    <property type="protein sequence ID" value="AAL48399.1"/>
    <property type="status" value="ALT_INIT"/>
    <property type="molecule type" value="mRNA"/>
</dbReference>
<dbReference type="RefSeq" id="NP_001259997.1">
    <property type="nucleotide sequence ID" value="NM_001273068.1"/>
</dbReference>
<dbReference type="RefSeq" id="NP_608772.3">
    <property type="nucleotide sequence ID" value="NM_134928.6"/>
</dbReference>
<dbReference type="SMR" id="Q9VQP9"/>
<dbReference type="BioGRID" id="59766">
    <property type="interactions" value="11"/>
</dbReference>
<dbReference type="ComplexPortal" id="CPX-8761">
    <property type="entry name" value="Oligosaccharyltransferase A complex"/>
</dbReference>
<dbReference type="ComplexPortal" id="CPX-8803">
    <property type="entry name" value="Oligosaccharyltransferase B complex"/>
</dbReference>
<dbReference type="FunCoup" id="Q9VQP9">
    <property type="interactions" value="509"/>
</dbReference>
<dbReference type="IntAct" id="Q9VQP9">
    <property type="interactions" value="4"/>
</dbReference>
<dbReference type="STRING" id="7227.FBpp0304680"/>
<dbReference type="PaxDb" id="7227-FBpp0304680"/>
<dbReference type="DNASU" id="33554"/>
<dbReference type="EnsemblMetazoa" id="FBtr0077594">
    <property type="protein sequence ID" value="FBpp0077282"/>
    <property type="gene ID" value="FBgn0031529"/>
</dbReference>
<dbReference type="EnsemblMetazoa" id="FBtr0332407">
    <property type="protein sequence ID" value="FBpp0304680"/>
    <property type="gene ID" value="FBgn0031529"/>
</dbReference>
<dbReference type="GeneID" id="33554"/>
<dbReference type="KEGG" id="dme:Dmel_CG9662"/>
<dbReference type="UCSC" id="CG9662-RA">
    <property type="organism name" value="d. melanogaster"/>
</dbReference>
<dbReference type="AGR" id="FB:FBgn0031529"/>
<dbReference type="FlyBase" id="FBgn0031529">
    <property type="gene designation" value="CG9662"/>
</dbReference>
<dbReference type="VEuPathDB" id="VectorBase:FBgn0031529"/>
<dbReference type="eggNOG" id="KOG3356">
    <property type="taxonomic scope" value="Eukaryota"/>
</dbReference>
<dbReference type="GeneTree" id="ENSGT00390000001376"/>
<dbReference type="HOGENOM" id="CLU_109136_1_0_1"/>
<dbReference type="InParanoid" id="Q9VQP9"/>
<dbReference type="OMA" id="CWIFMRM"/>
<dbReference type="OrthoDB" id="10256333at2759"/>
<dbReference type="PhylomeDB" id="Q9VQP9"/>
<dbReference type="BioGRID-ORCS" id="33554">
    <property type="hits" value="0 hits in 1 CRISPR screen"/>
</dbReference>
<dbReference type="ChiTaRS" id="CG9662">
    <property type="organism name" value="fly"/>
</dbReference>
<dbReference type="GenomeRNAi" id="33554"/>
<dbReference type="PRO" id="PR:Q9VQP9"/>
<dbReference type="Proteomes" id="UP000000803">
    <property type="component" value="Chromosome 2L"/>
</dbReference>
<dbReference type="Bgee" id="FBgn0031529">
    <property type="expression patterns" value="Expressed in adult middle midgut class II enteroendocrine cell in adult midgut (Drosophila) and 104 other cell types or tissues"/>
</dbReference>
<dbReference type="ExpressionAtlas" id="Q9VQP9">
    <property type="expression patterns" value="baseline and differential"/>
</dbReference>
<dbReference type="GO" id="GO:0008250">
    <property type="term" value="C:oligosaccharyltransferase complex"/>
    <property type="evidence" value="ECO:0000318"/>
    <property type="project" value="GO_Central"/>
</dbReference>
<dbReference type="GO" id="GO:0006486">
    <property type="term" value="P:protein glycosylation"/>
    <property type="evidence" value="ECO:0007669"/>
    <property type="project" value="InterPro"/>
</dbReference>
<dbReference type="InterPro" id="IPR021149">
    <property type="entry name" value="OligosaccharylTrfase_OST3/OST6"/>
</dbReference>
<dbReference type="InterPro" id="IPR042416">
    <property type="entry name" value="OSTC"/>
</dbReference>
<dbReference type="PANTHER" id="PTHR13160">
    <property type="entry name" value="OLIGOSACCHARYLTRANSFERASE COMPLEX SUBUNIT OSTC"/>
    <property type="match status" value="1"/>
</dbReference>
<dbReference type="PANTHER" id="PTHR13160:SF4">
    <property type="entry name" value="OLIGOSACCHARYLTRANSFERASE COMPLEX SUBUNIT OSTC"/>
    <property type="match status" value="1"/>
</dbReference>
<dbReference type="Pfam" id="PF04756">
    <property type="entry name" value="OST3_OST6"/>
    <property type="match status" value="1"/>
</dbReference>
<organism>
    <name type="scientific">Drosophila melanogaster</name>
    <name type="common">Fruit fly</name>
    <dbReference type="NCBI Taxonomy" id="7227"/>
    <lineage>
        <taxon>Eukaryota</taxon>
        <taxon>Metazoa</taxon>
        <taxon>Ecdysozoa</taxon>
        <taxon>Arthropoda</taxon>
        <taxon>Hexapoda</taxon>
        <taxon>Insecta</taxon>
        <taxon>Pterygota</taxon>
        <taxon>Neoptera</taxon>
        <taxon>Endopterygota</taxon>
        <taxon>Diptera</taxon>
        <taxon>Brachycera</taxon>
        <taxon>Muscomorpha</taxon>
        <taxon>Ephydroidea</taxon>
        <taxon>Drosophilidae</taxon>
        <taxon>Drosophila</taxon>
        <taxon>Sophophora</taxon>
    </lineage>
</organism>
<reference key="1">
    <citation type="journal article" date="2000" name="Science">
        <title>The genome sequence of Drosophila melanogaster.</title>
        <authorList>
            <person name="Adams M.D."/>
            <person name="Celniker S.E."/>
            <person name="Holt R.A."/>
            <person name="Evans C.A."/>
            <person name="Gocayne J.D."/>
            <person name="Amanatides P.G."/>
            <person name="Scherer S.E."/>
            <person name="Li P.W."/>
            <person name="Hoskins R.A."/>
            <person name="Galle R.F."/>
            <person name="George R.A."/>
            <person name="Lewis S.E."/>
            <person name="Richards S."/>
            <person name="Ashburner M."/>
            <person name="Henderson S.N."/>
            <person name="Sutton G.G."/>
            <person name="Wortman J.R."/>
            <person name="Yandell M.D."/>
            <person name="Zhang Q."/>
            <person name="Chen L.X."/>
            <person name="Brandon R.C."/>
            <person name="Rogers Y.-H.C."/>
            <person name="Blazej R.G."/>
            <person name="Champe M."/>
            <person name="Pfeiffer B.D."/>
            <person name="Wan K.H."/>
            <person name="Doyle C."/>
            <person name="Baxter E.G."/>
            <person name="Helt G."/>
            <person name="Nelson C.R."/>
            <person name="Miklos G.L.G."/>
            <person name="Abril J.F."/>
            <person name="Agbayani A."/>
            <person name="An H.-J."/>
            <person name="Andrews-Pfannkoch C."/>
            <person name="Baldwin D."/>
            <person name="Ballew R.M."/>
            <person name="Basu A."/>
            <person name="Baxendale J."/>
            <person name="Bayraktaroglu L."/>
            <person name="Beasley E.M."/>
            <person name="Beeson K.Y."/>
            <person name="Benos P.V."/>
            <person name="Berman B.P."/>
            <person name="Bhandari D."/>
            <person name="Bolshakov S."/>
            <person name="Borkova D."/>
            <person name="Botchan M.R."/>
            <person name="Bouck J."/>
            <person name="Brokstein P."/>
            <person name="Brottier P."/>
            <person name="Burtis K.C."/>
            <person name="Busam D.A."/>
            <person name="Butler H."/>
            <person name="Cadieu E."/>
            <person name="Center A."/>
            <person name="Chandra I."/>
            <person name="Cherry J.M."/>
            <person name="Cawley S."/>
            <person name="Dahlke C."/>
            <person name="Davenport L.B."/>
            <person name="Davies P."/>
            <person name="de Pablos B."/>
            <person name="Delcher A."/>
            <person name="Deng Z."/>
            <person name="Mays A.D."/>
            <person name="Dew I."/>
            <person name="Dietz S.M."/>
            <person name="Dodson K."/>
            <person name="Doup L.E."/>
            <person name="Downes M."/>
            <person name="Dugan-Rocha S."/>
            <person name="Dunkov B.C."/>
            <person name="Dunn P."/>
            <person name="Durbin K.J."/>
            <person name="Evangelista C.C."/>
            <person name="Ferraz C."/>
            <person name="Ferriera S."/>
            <person name="Fleischmann W."/>
            <person name="Fosler C."/>
            <person name="Gabrielian A.E."/>
            <person name="Garg N.S."/>
            <person name="Gelbart W.M."/>
            <person name="Glasser K."/>
            <person name="Glodek A."/>
            <person name="Gong F."/>
            <person name="Gorrell J.H."/>
            <person name="Gu Z."/>
            <person name="Guan P."/>
            <person name="Harris M."/>
            <person name="Harris N.L."/>
            <person name="Harvey D.A."/>
            <person name="Heiman T.J."/>
            <person name="Hernandez J.R."/>
            <person name="Houck J."/>
            <person name="Hostin D."/>
            <person name="Houston K.A."/>
            <person name="Howland T.J."/>
            <person name="Wei M.-H."/>
            <person name="Ibegwam C."/>
            <person name="Jalali M."/>
            <person name="Kalush F."/>
            <person name="Karpen G.H."/>
            <person name="Ke Z."/>
            <person name="Kennison J.A."/>
            <person name="Ketchum K.A."/>
            <person name="Kimmel B.E."/>
            <person name="Kodira C.D."/>
            <person name="Kraft C.L."/>
            <person name="Kravitz S."/>
            <person name="Kulp D."/>
            <person name="Lai Z."/>
            <person name="Lasko P."/>
            <person name="Lei Y."/>
            <person name="Levitsky A.A."/>
            <person name="Li J.H."/>
            <person name="Li Z."/>
            <person name="Liang Y."/>
            <person name="Lin X."/>
            <person name="Liu X."/>
            <person name="Mattei B."/>
            <person name="McIntosh T.C."/>
            <person name="McLeod M.P."/>
            <person name="McPherson D."/>
            <person name="Merkulov G."/>
            <person name="Milshina N.V."/>
            <person name="Mobarry C."/>
            <person name="Morris J."/>
            <person name="Moshrefi A."/>
            <person name="Mount S.M."/>
            <person name="Moy M."/>
            <person name="Murphy B."/>
            <person name="Murphy L."/>
            <person name="Muzny D.M."/>
            <person name="Nelson D.L."/>
            <person name="Nelson D.R."/>
            <person name="Nelson K.A."/>
            <person name="Nixon K."/>
            <person name="Nusskern D.R."/>
            <person name="Pacleb J.M."/>
            <person name="Palazzolo M."/>
            <person name="Pittman G.S."/>
            <person name="Pan S."/>
            <person name="Pollard J."/>
            <person name="Puri V."/>
            <person name="Reese M.G."/>
            <person name="Reinert K."/>
            <person name="Remington K."/>
            <person name="Saunders R.D.C."/>
            <person name="Scheeler F."/>
            <person name="Shen H."/>
            <person name="Shue B.C."/>
            <person name="Siden-Kiamos I."/>
            <person name="Simpson M."/>
            <person name="Skupski M.P."/>
            <person name="Smith T.J."/>
            <person name="Spier E."/>
            <person name="Spradling A.C."/>
            <person name="Stapleton M."/>
            <person name="Strong R."/>
            <person name="Sun E."/>
            <person name="Svirskas R."/>
            <person name="Tector C."/>
            <person name="Turner R."/>
            <person name="Venter E."/>
            <person name="Wang A.H."/>
            <person name="Wang X."/>
            <person name="Wang Z.-Y."/>
            <person name="Wassarman D.A."/>
            <person name="Weinstock G.M."/>
            <person name="Weissenbach J."/>
            <person name="Williams S.M."/>
            <person name="Woodage T."/>
            <person name="Worley K.C."/>
            <person name="Wu D."/>
            <person name="Yang S."/>
            <person name="Yao Q.A."/>
            <person name="Ye J."/>
            <person name="Yeh R.-F."/>
            <person name="Zaveri J.S."/>
            <person name="Zhan M."/>
            <person name="Zhang G."/>
            <person name="Zhao Q."/>
            <person name="Zheng L."/>
            <person name="Zheng X.H."/>
            <person name="Zhong F.N."/>
            <person name="Zhong W."/>
            <person name="Zhou X."/>
            <person name="Zhu S.C."/>
            <person name="Zhu X."/>
            <person name="Smith H.O."/>
            <person name="Gibbs R.A."/>
            <person name="Myers E.W."/>
            <person name="Rubin G.M."/>
            <person name="Venter J.C."/>
        </authorList>
    </citation>
    <scope>NUCLEOTIDE SEQUENCE [LARGE SCALE GENOMIC DNA]</scope>
    <source>
        <strain>Berkeley</strain>
    </source>
</reference>
<reference key="2">
    <citation type="journal article" date="2002" name="Genome Biol.">
        <title>Annotation of the Drosophila melanogaster euchromatic genome: a systematic review.</title>
        <authorList>
            <person name="Misra S."/>
            <person name="Crosby M.A."/>
            <person name="Mungall C.J."/>
            <person name="Matthews B.B."/>
            <person name="Campbell K.S."/>
            <person name="Hradecky P."/>
            <person name="Huang Y."/>
            <person name="Kaminker J.S."/>
            <person name="Millburn G.H."/>
            <person name="Prochnik S.E."/>
            <person name="Smith C.D."/>
            <person name="Tupy J.L."/>
            <person name="Whitfield E.J."/>
            <person name="Bayraktaroglu L."/>
            <person name="Berman B.P."/>
            <person name="Bettencourt B.R."/>
            <person name="Celniker S.E."/>
            <person name="de Grey A.D.N.J."/>
            <person name="Drysdale R.A."/>
            <person name="Harris N.L."/>
            <person name="Richter J."/>
            <person name="Russo S."/>
            <person name="Schroeder A.J."/>
            <person name="Shu S.Q."/>
            <person name="Stapleton M."/>
            <person name="Yamada C."/>
            <person name="Ashburner M."/>
            <person name="Gelbart W.M."/>
            <person name="Rubin G.M."/>
            <person name="Lewis S.E."/>
        </authorList>
    </citation>
    <scope>GENOME REANNOTATION</scope>
    <source>
        <strain>Berkeley</strain>
    </source>
</reference>
<reference key="3">
    <citation type="journal article" date="2002" name="Genome Biol.">
        <title>A Drosophila full-length cDNA resource.</title>
        <authorList>
            <person name="Stapleton M."/>
            <person name="Carlson J.W."/>
            <person name="Brokstein P."/>
            <person name="Yu C."/>
            <person name="Champe M."/>
            <person name="George R.A."/>
            <person name="Guarin H."/>
            <person name="Kronmiller B."/>
            <person name="Pacleb J.M."/>
            <person name="Park S."/>
            <person name="Wan K.H."/>
            <person name="Rubin G.M."/>
            <person name="Celniker S.E."/>
        </authorList>
    </citation>
    <scope>NUCLEOTIDE SEQUENCE [LARGE SCALE MRNA] OF 44-149</scope>
    <source>
        <strain>Berkeley</strain>
        <tissue>Testis</tissue>
    </source>
</reference>
<keyword id="KW-0472">Membrane</keyword>
<keyword id="KW-1185">Reference proteome</keyword>
<keyword id="KW-0812">Transmembrane</keyword>
<keyword id="KW-1133">Transmembrane helix</keyword>